<protein>
    <recommendedName>
        <fullName>Uncharacterized lipoprotein MYCGA2980</fullName>
    </recommendedName>
</protein>
<sequence>MGLSRKKIFTWPLLLTGMAVVSTTFSSCSVFNFFSNLPTTTDNNNYGPTVQNLSAFLPTSDYKKIYDLSFSLEFNNSGGYNPSRLMSNNEGVTAENVNRPYRVFGTGWLFDWQAQPVDENDQNAKWTGYFATNLHVAEALLNPLDNKNYRPAWYKNELPLPGVDQTLYFNLGKWDENLAVQNKHNPKSLTYLPLSNLPKTVYTATSFYKESPKWITPIEADNPGIREYIDFAVLSITLDLSWTMRNGEKVHRYNDEYQLYNRWIMPAMNVAKALWDNKGVLNQPATPPNKKEEDDQLTDQLPYHGFFDRSNYTNPNVSLNNFSVYLGGYPYYANWPTTPQYTKFSVPSLSRRQIPITSDSRGSPGWTINALNPTELDGQKIASSTSLSSTGGIRAGIYNADIARNFQLVYRNVKYKQYGYGYIIQNSNLSAGSSGSLALTSNNQALGIYFGTVSVDAKKEATFGLVASLFNPNKIQVNVVTGNNVFETDTIQPYDLIYGNDLMTDDYGSYIRSLQTLNLSSRLLTKIKDNLPKKEGSTNQANQQTNQTNRSTDATKKDSSSDETNKNPLAELLSDIFKNLPNWN</sequence>
<comment type="subcellular location">
    <subcellularLocation>
        <location evidence="1">Cell membrane</location>
        <topology evidence="1">Lipid-anchor</topology>
    </subcellularLocation>
</comment>
<comment type="similarity">
    <text evidence="3">Belongs to the MG067/MG068/MG395 family.</text>
</comment>
<dbReference type="EMBL" id="AE015450">
    <property type="protein sequence ID" value="AAP56647.2"/>
    <property type="molecule type" value="Genomic_DNA"/>
</dbReference>
<dbReference type="EMBL" id="X64256">
    <property type="protein sequence ID" value="CAA45543.1"/>
    <property type="molecule type" value="Genomic_DNA"/>
</dbReference>
<dbReference type="PIR" id="S24331">
    <property type="entry name" value="S24331"/>
</dbReference>
<dbReference type="RefSeq" id="WP_011113539.1">
    <property type="nucleotide sequence ID" value="NC_004829.2"/>
</dbReference>
<dbReference type="KEGG" id="mga:MGA_1161"/>
<dbReference type="HOGENOM" id="CLU_038569_1_0_14"/>
<dbReference type="OrthoDB" id="398874at2"/>
<dbReference type="Proteomes" id="UP000001418">
    <property type="component" value="Chromosome"/>
</dbReference>
<dbReference type="GO" id="GO:0005886">
    <property type="term" value="C:plasma membrane"/>
    <property type="evidence" value="ECO:0007669"/>
    <property type="project" value="UniProtKB-SubCell"/>
</dbReference>
<dbReference type="InterPro" id="IPR022382">
    <property type="entry name" value="Mycoplasma_peptidase_DUF31"/>
</dbReference>
<dbReference type="InterPro" id="IPR022381">
    <property type="entry name" value="Uncharacterised_MG067"/>
</dbReference>
<dbReference type="NCBIfam" id="NF045841">
    <property type="entry name" value="Ig_SerProt_MIP"/>
    <property type="match status" value="1"/>
</dbReference>
<dbReference type="Pfam" id="PF01732">
    <property type="entry name" value="Mycop_pep_DUF31"/>
    <property type="match status" value="1"/>
</dbReference>
<dbReference type="PRINTS" id="PR00840">
    <property type="entry name" value="Y06768FAMILY"/>
</dbReference>
<dbReference type="PROSITE" id="PS51257">
    <property type="entry name" value="PROKAR_LIPOPROTEIN"/>
    <property type="match status" value="1"/>
</dbReference>
<name>Y298_MYCGA</name>
<gene>
    <name type="ordered locus">MYCGA2980</name>
    <name type="ORF">MGA_1161</name>
    <name type="ORF">MGA_1162</name>
</gene>
<accession>P33276</accession>
<accession>Q7NBH1</accession>
<keyword id="KW-1003">Cell membrane</keyword>
<keyword id="KW-0449">Lipoprotein</keyword>
<keyword id="KW-0472">Membrane</keyword>
<keyword id="KW-0564">Palmitate</keyword>
<keyword id="KW-1185">Reference proteome</keyword>
<keyword id="KW-0732">Signal</keyword>
<organism>
    <name type="scientific">Mycoplasmoides gallisepticum (strain R(low / passage 15 / clone 2))</name>
    <name type="common">Mycoplasma gallisepticum</name>
    <dbReference type="NCBI Taxonomy" id="710127"/>
    <lineage>
        <taxon>Bacteria</taxon>
        <taxon>Bacillati</taxon>
        <taxon>Mycoplasmatota</taxon>
        <taxon>Mycoplasmoidales</taxon>
        <taxon>Mycoplasmoidaceae</taxon>
        <taxon>Mycoplasmoides</taxon>
    </lineage>
</organism>
<evidence type="ECO:0000255" key="1">
    <source>
        <dbReference type="PROSITE-ProRule" id="PRU00303"/>
    </source>
</evidence>
<evidence type="ECO:0000256" key="2">
    <source>
        <dbReference type="SAM" id="MobiDB-lite"/>
    </source>
</evidence>
<evidence type="ECO:0000305" key="3"/>
<proteinExistence type="inferred from homology"/>
<feature type="signal peptide" evidence="1">
    <location>
        <begin position="1"/>
        <end position="27"/>
    </location>
</feature>
<feature type="chain" id="PRO_0000210737" description="Uncharacterized lipoprotein MYCGA2980">
    <location>
        <begin position="28"/>
        <end position="584"/>
    </location>
</feature>
<feature type="region of interest" description="Disordered" evidence="2">
    <location>
        <begin position="530"/>
        <end position="570"/>
    </location>
</feature>
<feature type="compositionally biased region" description="Low complexity" evidence="2">
    <location>
        <begin position="538"/>
        <end position="552"/>
    </location>
</feature>
<feature type="compositionally biased region" description="Basic and acidic residues" evidence="2">
    <location>
        <begin position="553"/>
        <end position="565"/>
    </location>
</feature>
<feature type="lipid moiety-binding region" description="N-palmitoyl cysteine" evidence="1">
    <location>
        <position position="28"/>
    </location>
</feature>
<feature type="lipid moiety-binding region" description="S-diacylglycerol cysteine" evidence="1">
    <location>
        <position position="28"/>
    </location>
</feature>
<reference key="1">
    <citation type="journal article" date="2003" name="Microbiology">
        <title>The complete genome sequence of the avian pathogen Mycoplasma gallisepticum strain R(low).</title>
        <authorList>
            <person name="Papazisi L."/>
            <person name="Gorton T.S."/>
            <person name="Kutish G."/>
            <person name="Markham P.F."/>
            <person name="Browning G.F."/>
            <person name="Nguyen D.K."/>
            <person name="Swartzell S."/>
            <person name="Madan A."/>
            <person name="Mahairas G."/>
            <person name="Geary S.J."/>
        </authorList>
    </citation>
    <scope>NUCLEOTIDE SEQUENCE [LARGE SCALE GENOMIC DNA]</scope>
    <source>
        <strain>R(low / passage 15 / clone 2)</strain>
    </source>
</reference>
<reference key="2">
    <citation type="submission" date="2010-01" db="EMBL/GenBank/DDBJ databases">
        <authorList>
            <person name="Szczepanek S.M."/>
            <person name="Tulman E.R."/>
            <person name="Gorton T.S."/>
            <person name="Liao X."/>
            <person name="Lu Z."/>
            <person name="Zinski J."/>
            <person name="Aziz F."/>
            <person name="Frasca S. Jr."/>
            <person name="Kutish G.F."/>
            <person name="Geary S.J."/>
        </authorList>
    </citation>
    <scope>SEQUENCE REVISION TO N-TERMINUS</scope>
</reference>
<reference key="3">
    <citation type="journal article" date="1992" name="Biochem. J.">
        <title>Nucleotide sequence, organization and characterization of the atp genes and the encoded subunits of Mycoplasma gallisepticum ATPase.</title>
        <authorList>
            <person name="Rasmussen O.F."/>
            <person name="Shirvan M.H."/>
            <person name="Margalit H."/>
            <person name="Christiansen C."/>
            <person name="Rottem S."/>
        </authorList>
    </citation>
    <scope>NUCLEOTIDE SEQUENCE [GENOMIC DNA] OF 476-584</scope>
    <source>
        <strain>A5969Var.B</strain>
    </source>
</reference>